<proteinExistence type="evidence at transcript level"/>
<reference key="1">
    <citation type="journal article" date="1996" name="Insect Biochem. Mol. Biol.">
        <title>The precursor protein of the structural apolipoproteins of lipophorin: cDNA and deduced amino acid sequence.</title>
        <authorList>
            <person name="Sundermeyer K."/>
            <person name="Hendricks J.K."/>
            <person name="Prasad S.V."/>
            <person name="Wells M.A."/>
        </authorList>
    </citation>
    <scope>NUCLEOTIDE SEQUENCE [MRNA]</scope>
    <source>
        <tissue>Fat body</tissue>
    </source>
</reference>
<keyword id="KW-0165">Cleavage on pair of basic residues</keyword>
<keyword id="KW-1015">Disulfide bond</keyword>
<keyword id="KW-0325">Glycoprotein</keyword>
<keyword id="KW-0445">Lipid transport</keyword>
<keyword id="KW-0446">Lipid-binding</keyword>
<keyword id="KW-0964">Secreted</keyword>
<keyword id="KW-0732">Signal</keyword>
<keyword id="KW-0813">Transport</keyword>
<keyword id="KW-0879">Wnt signaling pathway</keyword>
<accession>Q25490</accession>
<protein>
    <recommendedName>
        <fullName>Apolipophorins</fullName>
    </recommendedName>
    <component>
        <recommendedName>
            <fullName>Apolipophorin-2</fullName>
        </recommendedName>
        <alternativeName>
            <fullName>Apolipophorin II</fullName>
        </alternativeName>
        <alternativeName>
            <fullName>apoLp-2</fullName>
        </alternativeName>
    </component>
    <component>
        <recommendedName>
            <fullName>Apolipophorin-1</fullName>
        </recommendedName>
        <alternativeName>
            <fullName>Apolipophorin I</fullName>
        </alternativeName>
        <alternativeName>
            <fullName>apoLp-1</fullName>
        </alternativeName>
    </component>
</protein>
<evidence type="ECO:0000250" key="1"/>
<evidence type="ECO:0000255" key="2"/>
<evidence type="ECO:0000255" key="3">
    <source>
        <dbReference type="PROSITE-ProRule" id="PRU00557"/>
    </source>
</evidence>
<evidence type="ECO:0000255" key="4">
    <source>
        <dbReference type="PROSITE-ProRule" id="PRU00580"/>
    </source>
</evidence>
<comment type="function">
    <text evidence="1">Constitutes the major component of lipophorin, which mediates transport for various types of lipids in hemolymph. Acts by forming lipoprotein particles that bind lipoproteins and lipids. May be required for morphogens wingless (wg) and hedgehog (hh) function, possibly by acting as vehicles for the movement of wg and hh (By similarity).</text>
</comment>
<comment type="subcellular location">
    <subcellularLocation>
        <location>Secreted</location>
    </subcellularLocation>
</comment>
<comment type="PTM">
    <text evidence="1">Cleaved into 2 chains by furin protease. However, prevention of cleavage does not impair its function (By similarity).</text>
</comment>
<comment type="PTM">
    <text evidence="1">N-glycosylated.</text>
</comment>
<comment type="online information" name="Protein Spotlight">
    <link uri="https://www.proteinspotlight.org/back_issues/059"/>
    <text>Lipid freight - Issue 59 of June 2005</text>
</comment>
<dbReference type="EMBL" id="U57651">
    <property type="protein sequence ID" value="AAB53254.1"/>
    <property type="molecule type" value="mRNA"/>
</dbReference>
<dbReference type="PIR" id="T18358">
    <property type="entry name" value="T18358"/>
</dbReference>
<dbReference type="SMR" id="Q25490"/>
<dbReference type="OrthoDB" id="6484170at2759"/>
<dbReference type="GO" id="GO:0005576">
    <property type="term" value="C:extracellular region"/>
    <property type="evidence" value="ECO:0007669"/>
    <property type="project" value="UniProtKB-SubCell"/>
</dbReference>
<dbReference type="GO" id="GO:0008289">
    <property type="term" value="F:lipid binding"/>
    <property type="evidence" value="ECO:0007669"/>
    <property type="project" value="UniProtKB-KW"/>
</dbReference>
<dbReference type="GO" id="GO:0005319">
    <property type="term" value="F:lipid transporter activity"/>
    <property type="evidence" value="ECO:0007669"/>
    <property type="project" value="InterPro"/>
</dbReference>
<dbReference type="GO" id="GO:0016055">
    <property type="term" value="P:Wnt signaling pathway"/>
    <property type="evidence" value="ECO:0007669"/>
    <property type="project" value="UniProtKB-KW"/>
</dbReference>
<dbReference type="Gene3D" id="2.30.230.10">
    <property type="entry name" value="Lipovitellin, beta-sheet shell regions, chain A"/>
    <property type="match status" value="1"/>
</dbReference>
<dbReference type="Gene3D" id="2.20.80.10">
    <property type="entry name" value="Lipovitellin-phosvitin complex, chain A, domain 4"/>
    <property type="match status" value="1"/>
</dbReference>
<dbReference type="Gene3D" id="2.20.50.20">
    <property type="entry name" value="Lipovitellin. Chain A, domain 3"/>
    <property type="match status" value="1"/>
</dbReference>
<dbReference type="Gene3D" id="1.25.10.20">
    <property type="entry name" value="Vitellinogen, superhelical"/>
    <property type="match status" value="1"/>
</dbReference>
<dbReference type="InterPro" id="IPR015819">
    <property type="entry name" value="Lipid_transp_b-sht_shell"/>
</dbReference>
<dbReference type="InterPro" id="IPR009454">
    <property type="entry name" value="Lipid_transpt_open_b-sht"/>
</dbReference>
<dbReference type="InterPro" id="IPR011030">
    <property type="entry name" value="Lipovitellin_superhlx_dom"/>
</dbReference>
<dbReference type="InterPro" id="IPR015816">
    <property type="entry name" value="Vitellinogen_b-sht_N"/>
</dbReference>
<dbReference type="InterPro" id="IPR015255">
    <property type="entry name" value="Vitellinogen_open_b-sht"/>
</dbReference>
<dbReference type="InterPro" id="IPR015817">
    <property type="entry name" value="Vitellinogen_open_b-sht_sub1"/>
</dbReference>
<dbReference type="InterPro" id="IPR050733">
    <property type="entry name" value="Vitellogenin/Apolipophorin"/>
</dbReference>
<dbReference type="InterPro" id="IPR001747">
    <property type="entry name" value="Vitellogenin_N"/>
</dbReference>
<dbReference type="InterPro" id="IPR001846">
    <property type="entry name" value="VWF_type-D"/>
</dbReference>
<dbReference type="PANTHER" id="PTHR23345:SF36">
    <property type="entry name" value="APOLIPOPHORINS"/>
    <property type="match status" value="1"/>
</dbReference>
<dbReference type="PANTHER" id="PTHR23345">
    <property type="entry name" value="VITELLOGENIN-RELATED"/>
    <property type="match status" value="1"/>
</dbReference>
<dbReference type="Pfam" id="PF06448">
    <property type="entry name" value="DUF1081"/>
    <property type="match status" value="1"/>
</dbReference>
<dbReference type="Pfam" id="PF09172">
    <property type="entry name" value="Vit_open_b-sht"/>
    <property type="match status" value="1"/>
</dbReference>
<dbReference type="Pfam" id="PF01347">
    <property type="entry name" value="Vitellogenin_N"/>
    <property type="match status" value="1"/>
</dbReference>
<dbReference type="Pfam" id="PF00094">
    <property type="entry name" value="VWD"/>
    <property type="match status" value="1"/>
</dbReference>
<dbReference type="SMART" id="SM01169">
    <property type="entry name" value="DUF1943"/>
    <property type="match status" value="1"/>
</dbReference>
<dbReference type="SMART" id="SM00638">
    <property type="entry name" value="LPD_N"/>
    <property type="match status" value="1"/>
</dbReference>
<dbReference type="SMART" id="SM00216">
    <property type="entry name" value="VWD"/>
    <property type="match status" value="1"/>
</dbReference>
<dbReference type="SUPFAM" id="SSF56968">
    <property type="entry name" value="Lipovitellin-phosvitin complex, beta-sheet shell regions"/>
    <property type="match status" value="2"/>
</dbReference>
<dbReference type="SUPFAM" id="SSF48431">
    <property type="entry name" value="Lipovitellin-phosvitin complex, superhelical domain"/>
    <property type="match status" value="1"/>
</dbReference>
<dbReference type="PROSITE" id="PS51211">
    <property type="entry name" value="VITELLOGENIN"/>
    <property type="match status" value="1"/>
</dbReference>
<dbReference type="PROSITE" id="PS51233">
    <property type="entry name" value="VWFD"/>
    <property type="match status" value="1"/>
</dbReference>
<feature type="signal peptide" evidence="2">
    <location>
        <begin position="1"/>
        <end position="23"/>
    </location>
</feature>
<feature type="chain" id="PRO_0000041530" description="Apolipophorin-2" evidence="1">
    <location>
        <begin position="24"/>
        <end position="711"/>
    </location>
</feature>
<feature type="chain" id="PRO_0000041531" description="Apolipophorin-1" evidence="1">
    <location>
        <begin position="712"/>
        <end position="3305"/>
    </location>
</feature>
<feature type="domain" description="Vitellogenin" evidence="3">
    <location>
        <begin position="39"/>
        <end position="640"/>
    </location>
</feature>
<feature type="domain" description="VWFD" evidence="4">
    <location>
        <begin position="2733"/>
        <end position="2899"/>
    </location>
</feature>
<feature type="site" description="Cleavage; by furin" evidence="1">
    <location>
        <begin position="711"/>
        <end position="712"/>
    </location>
</feature>
<feature type="glycosylation site" description="N-linked (GlcNAc...) asparagine" evidence="2">
    <location>
        <position position="643"/>
    </location>
</feature>
<feature type="glycosylation site" description="N-linked (GlcNAc...) asparagine" evidence="2">
    <location>
        <position position="2769"/>
    </location>
</feature>
<feature type="disulfide bond" evidence="4">
    <location>
        <begin position="2757"/>
        <end position="2898"/>
    </location>
</feature>
<name>APLP_MANSE</name>
<organism>
    <name type="scientific">Manduca sexta</name>
    <name type="common">Tobacco hawkmoth</name>
    <name type="synonym">Tobacco hornworm</name>
    <dbReference type="NCBI Taxonomy" id="7130"/>
    <lineage>
        <taxon>Eukaryota</taxon>
        <taxon>Metazoa</taxon>
        <taxon>Ecdysozoa</taxon>
        <taxon>Arthropoda</taxon>
        <taxon>Hexapoda</taxon>
        <taxon>Insecta</taxon>
        <taxon>Pterygota</taxon>
        <taxon>Neoptera</taxon>
        <taxon>Endopterygota</taxon>
        <taxon>Lepidoptera</taxon>
        <taxon>Glossata</taxon>
        <taxon>Ditrysia</taxon>
        <taxon>Bombycoidea</taxon>
        <taxon>Sphingidae</taxon>
        <taxon>Sphinginae</taxon>
        <taxon>Sphingini</taxon>
        <taxon>Manduca</taxon>
    </lineage>
</organism>
<sequence>MGKSNRLLSVLFVISVLWKAAYGNGKCQIACKGSSSPSFAAGQKYNYGVEGTVSVYLTGADNQETSLKMLGQASVSAISNCELELSVHNMVLSGPDGKKYPCPQGIEKPVRFSYQDGRVGPEICAAEDDSRRSLNIKRAIISLLQAEQKPSVQVDVFGVCPTEVSSSQEGGAVLLHRSRDLSRCAHREQGRNDFVNSIANPDAGIKDLQVLQSMLNVESKVNNGVPEKVSAIEEYLYKPFSVGENGARAKVHTKLTLSGKGGAGGGNAHCTESRSIIFDVPHGTSSASGNLNSVISAVKETARTVANDASSKSAGQFAQLVRIMRTSSKDDLMRIYSQVKAHQLEKRVYLDALLRAGTGESIEASIQILKSKDLSQLEQHLVFLSLGNARHVNNPALKAAAGLLDMPNLPKEVYLGAGALGGAYCREHDCHNVKPEGIVALSNKLGSKLQNCRPKNKPDEDVVVAILKGIRNIRHLEDSLIDKLVHCAVDNNVKARVRAVALEAFHADPCSAKIHKTAMDIMKNRQLDSEIRIKAYLAVIECPCSHSASEIKNLLDSEPVHQVGNFITSSLRHIRSSSNPDKQLAKKHYGQIRTPNKFKVDERKYSFYREMSYKLDALGAGGSVDQTVIYSQTSFLPRSVNFNLTVDLFGQSYNVMELGGRQGNLDRVVEHFLGPKSFLRTEDPQALYDNLVKRFQESKKKVEDSLSRGRRSIKSEIDVFDKNLKAESAPYNNELDLDIYVKLFGTDAVFLSFGDDKGFDFNKMLDQILGGCNSGINKAKHFQQEIRSHLLFMDAELAYPTSVGLPLRLNLIGAATARLDVATNIDIRQIFQSPQNAKADIKFVPSTDFEISGAFIIDADAFSTGIKVITNLHSSTGVHVNAKVLENGRGIDLQIGLPVDKQELIAASSDLVFVTAEKGQKEKQKVIKMEKGENEYSACFDQLSGPLGLTMCYDMVLPFPIVNRNDKLDSIAKAMGKWPLSGSAKFKLFLEKNDLRGYHIKAVVKEDKDAGRRSFELLLDTEGAKTRRSQLTGEAVYNENEVGVKLGLEAVGKVIYGHIWAHKKPNELVASVKGKLDDIEYSGKLGFSVQGNEHRAVYKPIFEYSLPDGSSPGSKKYEVKIDGQVIRECDGRVTKYTFDGVHVNLQNAEKPLEICGSVSTVAQPREVEFDVEVKHYASLKGSWKGSDVVLAFNNQLNPKINFDLKGKFENTDSMHNELDIHYGPNRGDNNARITFSQILKYHVENSKNFNVITKNNLEIRAVPFKLVANADVDPKKIDIDIEGQLQDKSAGFNLDARTHIKKEGDYSIKVKANLNNANLEAFSRRDIVNAEKSNVENYIDMKGVGRYELSGFVLHKTKPNDVNVGFIGHLKINGGGKNEDFKINIGHIETPAVFSSHATISGSRGDIIDYLLKIMRTANPNGNFKLVIKDSIAANGQYKVTDADGKGNGLIIIDFKKINRKIKGDVRFTAKEPVFNADIDLFLNFEKDNSDKVHFSTYNKKTDKVMDTKNKLEYAGKRTEVNIHQDGILAVTGKAHTVAELVLPTERCLSLKIDHDGAFKDGLYNGHMDMTISDAPKRGSGASTISYKGKVSNSNLDQEIIDYEGQINFKLKDGKNLQSTFSLKNNPDGDKFKYEFKSDVNGNLIPKPANLVATGTYSNSENEIDETYRLKGSYGSDIGFELAGVGTIKFLDAGDKKYLDDYTLTVRLPFEKAHDIKWVSTVLFLQPQGQEMTEYTLVESVQINADVYKIDANGKVGPKNGYGAVKVLVPHVEPFVLDYNYKSSHEGEKNNNYVELKTKYGKGKSASMVVDSSYAPHYSTLKVKANTPNNDKFKKLDVTVHSKNPSPDAYSNSVVVDADGRVYKIDSSIVLSKAHPVLDIQYHSPSSDKIRRLYLQGSSLSSTQGKLEVKVDNINDICLDAVSEANVQKDNVAFKVVANAKELGWKNYGIDISSKDSGSGKRLEFHATNDNKNVLSGSTSFISKQEGQKTIIEGSGSVKVKEEQKSANFKYIRTVFTDSNEKGVETFFNVALGERSYVAESRVTNYEYKNSYVYCEEKKQCAHAEIQSKIDMSTPGMIVNVINAGLDLRKLGVAPELGLQMRDEVSDRRPPRFTLDLHINKEDRKYHLHAYNTPENGHYASGVTVRLPSRVMALEYTLTHPTSQDLPFPIKGEACLDLDKNRPGHKTSARFLVDYSNSGSEDKAVAEIGFFHPKIEKEAVIRLNAFMKRPENGCFKIESSASLCHSALGTDRVAKVMFETTPNSVKFLADTPFVKAIDVEGSFNVNQQQRTQQCLFRICLLEGKPVQMSALVKDYQYYEFTTEESNRKLSYVGHLIPEKRVDISTDIILSGDKKNIAHGALFLQDNLVKSDYGLSKENFNYFLNALKKDLDTLEDRIKNVGEKASKDVEAVTQRAAPYFKKVEDNFRAEWNRFYQEIADDKVFKEISHVFNEIVQYIAKFIDEILQGTKRSWTPSCRPTLSHPRNREMYKKQIEPQVKQLYDTLGALMKEYLDGVIDVVAHFAAIVTDFFEKHKAELQELTNVFTEIFKDLTRLVVAQLKELPPKIAQIYNDIVSQITNMPFVVVLQEKWKEFNFAERAVQLVSQAYEAFSKILPTDELKEFAKALNAYLLKKIKEEKMEESKELPRAVREAGQRVLLITSIPALAVRRPRLRRWTWHHLKLAVGAGASAPSLGAASWSALRQLAAGDGPPALAPRGLPTAQLDPLDEVPNKLRAVVVNGQHIFTFDGRHLTFPGTCRYVLIHDHVDRNFTVLMQLANGQPKALVLEDKSGTIIELKDNGQVILNCQSHGFPVVEQDVFAFRQTSGRIGLCSKYGLMAFCTSKFEVCYFEVNGFYLGKLPGLLGDGNNEPYDDFRMPNGKICSSESEFGNSYRLSRSCPAANAPAHDHHQMHAPLPKPCERVFSGTSPLRPLSLMLDIAPFRQACIHAVTGADADKDLQQACDLARGYRRSRSRGCCPPRCPTPACAARTATGPGSWATPTSTNCPTDSLISSSPLRPLRTTPAHYKNMVVPLVSQLVDMLKGKHCTDIKVFLVGHTSKHPYPILYDTDLKLKNAKVSFDDKSRYDRIPFVKTGHEKFDSYSKTVVDFLNYIKIELGITNIEASQGQIFDLPLRPGAVKHVIFVTGGPTISQFFLLETVRALRNKVIIDEMAMSASLVTSTPGLKIGGGKNAAQIVGYEKHGVLLLGEKKQSKDSEAVRATLEVEDDPFSDAVEFANGVVFSASNYAALPAGQQKQFIQTAAHNIIQRMWREQIVQQCTCVFVDPFRVRSVCFNKARTEVARRRK</sequence>